<keyword id="KW-0004">4Fe-4S</keyword>
<keyword id="KW-0963">Cytoplasm</keyword>
<keyword id="KW-1015">Disulfide bond</keyword>
<keyword id="KW-0408">Iron</keyword>
<keyword id="KW-0411">Iron-sulfur</keyword>
<keyword id="KW-0479">Metal-binding</keyword>
<keyword id="KW-0489">Methyltransferase</keyword>
<keyword id="KW-1185">Reference proteome</keyword>
<keyword id="KW-0698">rRNA processing</keyword>
<keyword id="KW-0949">S-adenosyl-L-methionine</keyword>
<keyword id="KW-0808">Transferase</keyword>
<keyword id="KW-0819">tRNA processing</keyword>
<feature type="chain" id="PRO_0000350019" description="Dual-specificity RNA methyltransferase RlmN">
    <location>
        <begin position="1"/>
        <end position="360"/>
    </location>
</feature>
<feature type="domain" description="Radical SAM core" evidence="2">
    <location>
        <begin position="110"/>
        <end position="343"/>
    </location>
</feature>
<feature type="active site" description="Proton acceptor" evidence="1">
    <location>
        <position position="91"/>
    </location>
</feature>
<feature type="active site" description="S-methylcysteine intermediate" evidence="1">
    <location>
        <position position="348"/>
    </location>
</feature>
<feature type="binding site" evidence="1">
    <location>
        <position position="124"/>
    </location>
    <ligand>
        <name>[4Fe-4S] cluster</name>
        <dbReference type="ChEBI" id="CHEBI:49883"/>
        <note>4Fe-4S-S-AdoMet</note>
    </ligand>
</feature>
<feature type="binding site" evidence="1">
    <location>
        <position position="128"/>
    </location>
    <ligand>
        <name>[4Fe-4S] cluster</name>
        <dbReference type="ChEBI" id="CHEBI:49883"/>
        <note>4Fe-4S-S-AdoMet</note>
    </ligand>
</feature>
<feature type="binding site" evidence="1">
    <location>
        <position position="131"/>
    </location>
    <ligand>
        <name>[4Fe-4S] cluster</name>
        <dbReference type="ChEBI" id="CHEBI:49883"/>
        <note>4Fe-4S-S-AdoMet</note>
    </ligand>
</feature>
<feature type="binding site" evidence="1">
    <location>
        <begin position="174"/>
        <end position="175"/>
    </location>
    <ligand>
        <name>S-adenosyl-L-methionine</name>
        <dbReference type="ChEBI" id="CHEBI:59789"/>
    </ligand>
</feature>
<feature type="binding site" evidence="1">
    <location>
        <position position="206"/>
    </location>
    <ligand>
        <name>S-adenosyl-L-methionine</name>
        <dbReference type="ChEBI" id="CHEBI:59789"/>
    </ligand>
</feature>
<feature type="binding site" evidence="1">
    <location>
        <begin position="229"/>
        <end position="231"/>
    </location>
    <ligand>
        <name>S-adenosyl-L-methionine</name>
        <dbReference type="ChEBI" id="CHEBI:59789"/>
    </ligand>
</feature>
<feature type="binding site" evidence="1">
    <location>
        <position position="305"/>
    </location>
    <ligand>
        <name>S-adenosyl-L-methionine</name>
        <dbReference type="ChEBI" id="CHEBI:59789"/>
    </ligand>
</feature>
<feature type="disulfide bond" description="(transient)" evidence="1">
    <location>
        <begin position="117"/>
        <end position="348"/>
    </location>
</feature>
<evidence type="ECO:0000255" key="1">
    <source>
        <dbReference type="HAMAP-Rule" id="MF_01849"/>
    </source>
</evidence>
<evidence type="ECO:0000255" key="2">
    <source>
        <dbReference type="PROSITE-ProRule" id="PRU01266"/>
    </source>
</evidence>
<organism>
    <name type="scientific">Aliarcobacter butzleri (strain RM4018)</name>
    <name type="common">Arcobacter butzleri</name>
    <dbReference type="NCBI Taxonomy" id="367737"/>
    <lineage>
        <taxon>Bacteria</taxon>
        <taxon>Pseudomonadati</taxon>
        <taxon>Campylobacterota</taxon>
        <taxon>Epsilonproteobacteria</taxon>
        <taxon>Campylobacterales</taxon>
        <taxon>Arcobacteraceae</taxon>
        <taxon>Aliarcobacter</taxon>
    </lineage>
</organism>
<name>RLMN_ALIB4</name>
<protein>
    <recommendedName>
        <fullName evidence="1">Dual-specificity RNA methyltransferase RlmN</fullName>
        <ecNumber evidence="1">2.1.1.192</ecNumber>
    </recommendedName>
    <alternativeName>
        <fullName evidence="1">23S rRNA (adenine(2503)-C(2))-methyltransferase</fullName>
    </alternativeName>
    <alternativeName>
        <fullName evidence="1">23S rRNA m2A2503 methyltransferase</fullName>
    </alternativeName>
    <alternativeName>
        <fullName evidence="1">Ribosomal RNA large subunit methyltransferase N</fullName>
    </alternativeName>
    <alternativeName>
        <fullName evidence="1">tRNA (adenine(37)-C(2))-methyltransferase</fullName>
    </alternativeName>
    <alternativeName>
        <fullName evidence="1">tRNA m2A37 methyltransferase</fullName>
    </alternativeName>
</protein>
<comment type="function">
    <text evidence="1">Specifically methylates position 2 of adenine 2503 in 23S rRNA and position 2 of adenine 37 in tRNAs. m2A2503 modification seems to play a crucial role in the proofreading step occurring at the peptidyl transferase center and thus would serve to optimize ribosomal fidelity.</text>
</comment>
<comment type="catalytic activity">
    <reaction evidence="1">
        <text>adenosine(2503) in 23S rRNA + 2 reduced [2Fe-2S]-[ferredoxin] + 2 S-adenosyl-L-methionine = 2-methyladenosine(2503) in 23S rRNA + 5'-deoxyadenosine + L-methionine + 2 oxidized [2Fe-2S]-[ferredoxin] + S-adenosyl-L-homocysteine</text>
        <dbReference type="Rhea" id="RHEA:42916"/>
        <dbReference type="Rhea" id="RHEA-COMP:10000"/>
        <dbReference type="Rhea" id="RHEA-COMP:10001"/>
        <dbReference type="Rhea" id="RHEA-COMP:10152"/>
        <dbReference type="Rhea" id="RHEA-COMP:10282"/>
        <dbReference type="ChEBI" id="CHEBI:17319"/>
        <dbReference type="ChEBI" id="CHEBI:33737"/>
        <dbReference type="ChEBI" id="CHEBI:33738"/>
        <dbReference type="ChEBI" id="CHEBI:57844"/>
        <dbReference type="ChEBI" id="CHEBI:57856"/>
        <dbReference type="ChEBI" id="CHEBI:59789"/>
        <dbReference type="ChEBI" id="CHEBI:74411"/>
        <dbReference type="ChEBI" id="CHEBI:74497"/>
        <dbReference type="EC" id="2.1.1.192"/>
    </reaction>
</comment>
<comment type="catalytic activity">
    <reaction evidence="1">
        <text>adenosine(37) in tRNA + 2 reduced [2Fe-2S]-[ferredoxin] + 2 S-adenosyl-L-methionine = 2-methyladenosine(37) in tRNA + 5'-deoxyadenosine + L-methionine + 2 oxidized [2Fe-2S]-[ferredoxin] + S-adenosyl-L-homocysteine</text>
        <dbReference type="Rhea" id="RHEA:43332"/>
        <dbReference type="Rhea" id="RHEA-COMP:10000"/>
        <dbReference type="Rhea" id="RHEA-COMP:10001"/>
        <dbReference type="Rhea" id="RHEA-COMP:10162"/>
        <dbReference type="Rhea" id="RHEA-COMP:10485"/>
        <dbReference type="ChEBI" id="CHEBI:17319"/>
        <dbReference type="ChEBI" id="CHEBI:33737"/>
        <dbReference type="ChEBI" id="CHEBI:33738"/>
        <dbReference type="ChEBI" id="CHEBI:57844"/>
        <dbReference type="ChEBI" id="CHEBI:57856"/>
        <dbReference type="ChEBI" id="CHEBI:59789"/>
        <dbReference type="ChEBI" id="CHEBI:74411"/>
        <dbReference type="ChEBI" id="CHEBI:74497"/>
        <dbReference type="EC" id="2.1.1.192"/>
    </reaction>
</comment>
<comment type="cofactor">
    <cofactor evidence="1">
        <name>[4Fe-4S] cluster</name>
        <dbReference type="ChEBI" id="CHEBI:49883"/>
    </cofactor>
    <text evidence="1">Binds 1 [4Fe-4S] cluster. The cluster is coordinated with 3 cysteines and an exchangeable S-adenosyl-L-methionine.</text>
</comment>
<comment type="subcellular location">
    <subcellularLocation>
        <location evidence="1">Cytoplasm</location>
    </subcellularLocation>
</comment>
<comment type="miscellaneous">
    <text evidence="1">Reaction proceeds by a ping-pong mechanism involving intermediate methylation of a conserved cysteine residue.</text>
</comment>
<comment type="similarity">
    <text evidence="1">Belongs to the radical SAM superfamily. RlmN family.</text>
</comment>
<accession>A8EQW8</accession>
<proteinExistence type="inferred from homology"/>
<reference key="1">
    <citation type="journal article" date="2007" name="PLoS ONE">
        <title>The complete genome sequence and analysis of the Epsilonproteobacterium Arcobacter butzleri.</title>
        <authorList>
            <person name="Miller W.G."/>
            <person name="Parker C.T."/>
            <person name="Rubenfield M."/>
            <person name="Mendz G.L."/>
            <person name="Woesten M.M.S.M."/>
            <person name="Ussery D.W."/>
            <person name="Stolz J.F."/>
            <person name="Binnewies T.T."/>
            <person name="Hallin P.F."/>
            <person name="Wang G."/>
            <person name="Malek J.A."/>
            <person name="Rogosin A."/>
            <person name="Stanker L.H."/>
            <person name="Mandrell R.E."/>
        </authorList>
    </citation>
    <scope>NUCLEOTIDE SEQUENCE [LARGE SCALE GENOMIC DNA]</scope>
    <source>
        <strain>RM4018</strain>
    </source>
</reference>
<gene>
    <name evidence="1" type="primary">rlmN</name>
    <name type="ordered locus">Abu_0057</name>
</gene>
<dbReference type="EC" id="2.1.1.192" evidence="1"/>
<dbReference type="EMBL" id="CP000361">
    <property type="protein sequence ID" value="ABV66342.1"/>
    <property type="molecule type" value="Genomic_DNA"/>
</dbReference>
<dbReference type="RefSeq" id="WP_012011967.1">
    <property type="nucleotide sequence ID" value="NC_009850.1"/>
</dbReference>
<dbReference type="SMR" id="A8EQW8"/>
<dbReference type="STRING" id="367737.Abu_0057"/>
<dbReference type="GeneID" id="24305617"/>
<dbReference type="KEGG" id="abu:Abu_0057"/>
<dbReference type="eggNOG" id="COG0820">
    <property type="taxonomic scope" value="Bacteria"/>
</dbReference>
<dbReference type="HOGENOM" id="CLU_029101_2_0_7"/>
<dbReference type="Proteomes" id="UP000001136">
    <property type="component" value="Chromosome"/>
</dbReference>
<dbReference type="GO" id="GO:0005737">
    <property type="term" value="C:cytoplasm"/>
    <property type="evidence" value="ECO:0007669"/>
    <property type="project" value="UniProtKB-SubCell"/>
</dbReference>
<dbReference type="GO" id="GO:0051539">
    <property type="term" value="F:4 iron, 4 sulfur cluster binding"/>
    <property type="evidence" value="ECO:0007669"/>
    <property type="project" value="UniProtKB-UniRule"/>
</dbReference>
<dbReference type="GO" id="GO:0046872">
    <property type="term" value="F:metal ion binding"/>
    <property type="evidence" value="ECO:0007669"/>
    <property type="project" value="UniProtKB-KW"/>
</dbReference>
<dbReference type="GO" id="GO:0070040">
    <property type="term" value="F:rRNA (adenine(2503)-C2-)-methyltransferase activity"/>
    <property type="evidence" value="ECO:0007669"/>
    <property type="project" value="UniProtKB-UniRule"/>
</dbReference>
<dbReference type="GO" id="GO:0019843">
    <property type="term" value="F:rRNA binding"/>
    <property type="evidence" value="ECO:0007669"/>
    <property type="project" value="UniProtKB-UniRule"/>
</dbReference>
<dbReference type="GO" id="GO:0002935">
    <property type="term" value="F:tRNA (adenine(37)-C2)-methyltransferase activity"/>
    <property type="evidence" value="ECO:0007669"/>
    <property type="project" value="UniProtKB-UniRule"/>
</dbReference>
<dbReference type="GO" id="GO:0000049">
    <property type="term" value="F:tRNA binding"/>
    <property type="evidence" value="ECO:0007669"/>
    <property type="project" value="UniProtKB-UniRule"/>
</dbReference>
<dbReference type="GO" id="GO:0070475">
    <property type="term" value="P:rRNA base methylation"/>
    <property type="evidence" value="ECO:0007669"/>
    <property type="project" value="UniProtKB-UniRule"/>
</dbReference>
<dbReference type="GO" id="GO:0030488">
    <property type="term" value="P:tRNA methylation"/>
    <property type="evidence" value="ECO:0007669"/>
    <property type="project" value="UniProtKB-UniRule"/>
</dbReference>
<dbReference type="FunFam" id="3.20.20.70:FF:000014">
    <property type="entry name" value="Probable dual-specificity RNA methyltransferase RlmN"/>
    <property type="match status" value="1"/>
</dbReference>
<dbReference type="Gene3D" id="1.10.150.530">
    <property type="match status" value="1"/>
</dbReference>
<dbReference type="Gene3D" id="3.20.20.70">
    <property type="entry name" value="Aldolase class I"/>
    <property type="match status" value="1"/>
</dbReference>
<dbReference type="HAMAP" id="MF_01849">
    <property type="entry name" value="RNA_methyltr_RlmN"/>
    <property type="match status" value="1"/>
</dbReference>
<dbReference type="InterPro" id="IPR013785">
    <property type="entry name" value="Aldolase_TIM"/>
</dbReference>
<dbReference type="InterPro" id="IPR040072">
    <property type="entry name" value="Methyltransferase_A"/>
</dbReference>
<dbReference type="InterPro" id="IPR048641">
    <property type="entry name" value="RlmN_N"/>
</dbReference>
<dbReference type="InterPro" id="IPR027492">
    <property type="entry name" value="RNA_MTrfase_RlmN"/>
</dbReference>
<dbReference type="InterPro" id="IPR004383">
    <property type="entry name" value="rRNA_lsu_MTrfase_RlmN/Cfr"/>
</dbReference>
<dbReference type="InterPro" id="IPR007197">
    <property type="entry name" value="rSAM"/>
</dbReference>
<dbReference type="NCBIfam" id="TIGR00048">
    <property type="entry name" value="rRNA_mod_RlmN"/>
    <property type="match status" value="1"/>
</dbReference>
<dbReference type="PANTHER" id="PTHR30544">
    <property type="entry name" value="23S RRNA METHYLTRANSFERASE"/>
    <property type="match status" value="1"/>
</dbReference>
<dbReference type="PANTHER" id="PTHR30544:SF5">
    <property type="entry name" value="RADICAL SAM CORE DOMAIN-CONTAINING PROTEIN"/>
    <property type="match status" value="1"/>
</dbReference>
<dbReference type="Pfam" id="PF04055">
    <property type="entry name" value="Radical_SAM"/>
    <property type="match status" value="1"/>
</dbReference>
<dbReference type="Pfam" id="PF21016">
    <property type="entry name" value="RlmN_N"/>
    <property type="match status" value="1"/>
</dbReference>
<dbReference type="PIRSF" id="PIRSF006004">
    <property type="entry name" value="CHP00048"/>
    <property type="match status" value="1"/>
</dbReference>
<dbReference type="SFLD" id="SFLDF00275">
    <property type="entry name" value="adenosine_C2_methyltransferase"/>
    <property type="match status" value="1"/>
</dbReference>
<dbReference type="SFLD" id="SFLDS00029">
    <property type="entry name" value="Radical_SAM"/>
    <property type="match status" value="1"/>
</dbReference>
<dbReference type="SUPFAM" id="SSF102114">
    <property type="entry name" value="Radical SAM enzymes"/>
    <property type="match status" value="1"/>
</dbReference>
<dbReference type="PROSITE" id="PS51918">
    <property type="entry name" value="RADICAL_SAM"/>
    <property type="match status" value="1"/>
</dbReference>
<sequence>MAKEALPSIYDYTLDELKEILKPSFRAKQVYNWLYKKYASSYDEMKNLPKELVEDLKENYPIDIMQIVKKEQSRDGSIKYLFKLRDNHTVEAVLLLMKDKKIDEDGQIVRSEKYTVCISSQVGCKVGCSFCLTAKGGFVRNLTVGEYIAQIVNIKRDNDIAENKALNIVYMGMGEPLDNFDNFTKAVEIFSELDGLAISRRRQTVSTSGIATKIKKLGEKDLQIQLAISLHAVDDELRSELIPMNKAYNIASIIQAVKAFPVDTRKKVMFEYLVIKDKNDSIEAAKKLVSLLNGIQAKVNLIYFNPYPGTSYQRPQEKDMLKFKDFLNQKGVICTIRESKGLDISAACGQLKEKEANGNS</sequence>